<reference key="1">
    <citation type="journal article" date="2009" name="Genome Biol.">
        <title>Genomic and genetic analyses of diversity and plant interactions of Pseudomonas fluorescens.</title>
        <authorList>
            <person name="Silby M.W."/>
            <person name="Cerdeno-Tarraga A.M."/>
            <person name="Vernikos G.S."/>
            <person name="Giddens S.R."/>
            <person name="Jackson R.W."/>
            <person name="Preston G.M."/>
            <person name="Zhang X.-X."/>
            <person name="Moon C.D."/>
            <person name="Gehrig S.M."/>
            <person name="Godfrey S.A.C."/>
            <person name="Knight C.G."/>
            <person name="Malone J.G."/>
            <person name="Robinson Z."/>
            <person name="Spiers A.J."/>
            <person name="Harris S."/>
            <person name="Challis G.L."/>
            <person name="Yaxley A.M."/>
            <person name="Harris D."/>
            <person name="Seeger K."/>
            <person name="Murphy L."/>
            <person name="Rutter S."/>
            <person name="Squares R."/>
            <person name="Quail M.A."/>
            <person name="Saunders E."/>
            <person name="Mavromatis K."/>
            <person name="Brettin T.S."/>
            <person name="Bentley S.D."/>
            <person name="Hothersall J."/>
            <person name="Stephens E."/>
            <person name="Thomas C.M."/>
            <person name="Parkhill J."/>
            <person name="Levy S.B."/>
            <person name="Rainey P.B."/>
            <person name="Thomson N.R."/>
        </authorList>
    </citation>
    <scope>NUCLEOTIDE SEQUENCE [LARGE SCALE GENOMIC DNA]</scope>
    <source>
        <strain>Pf0-1</strain>
    </source>
</reference>
<evidence type="ECO:0000255" key="1">
    <source>
        <dbReference type="HAMAP-Rule" id="MF_00376"/>
    </source>
</evidence>
<proteinExistence type="inferred from homology"/>
<gene>
    <name evidence="1" type="primary">coaE</name>
    <name type="ordered locus">Pfl01_4823</name>
</gene>
<comment type="function">
    <text evidence="1">Catalyzes the phosphorylation of the 3'-hydroxyl group of dephosphocoenzyme A to form coenzyme A.</text>
</comment>
<comment type="catalytic activity">
    <reaction evidence="1">
        <text>3'-dephospho-CoA + ATP = ADP + CoA + H(+)</text>
        <dbReference type="Rhea" id="RHEA:18245"/>
        <dbReference type="ChEBI" id="CHEBI:15378"/>
        <dbReference type="ChEBI" id="CHEBI:30616"/>
        <dbReference type="ChEBI" id="CHEBI:57287"/>
        <dbReference type="ChEBI" id="CHEBI:57328"/>
        <dbReference type="ChEBI" id="CHEBI:456216"/>
        <dbReference type="EC" id="2.7.1.24"/>
    </reaction>
</comment>
<comment type="pathway">
    <text evidence="1">Cofactor biosynthesis; coenzyme A biosynthesis; CoA from (R)-pantothenate: step 5/5.</text>
</comment>
<comment type="subcellular location">
    <subcellularLocation>
        <location evidence="1">Cytoplasm</location>
    </subcellularLocation>
</comment>
<comment type="similarity">
    <text evidence="1">Belongs to the CoaE family.</text>
</comment>
<feature type="chain" id="PRO_0000243320" description="Dephospho-CoA kinase">
    <location>
        <begin position="1"/>
        <end position="207"/>
    </location>
</feature>
<feature type="domain" description="DPCK" evidence="1">
    <location>
        <begin position="10"/>
        <end position="207"/>
    </location>
</feature>
<feature type="binding site" evidence="1">
    <location>
        <begin position="18"/>
        <end position="23"/>
    </location>
    <ligand>
        <name>ATP</name>
        <dbReference type="ChEBI" id="CHEBI:30616"/>
    </ligand>
</feature>
<organism>
    <name type="scientific">Pseudomonas fluorescens (strain Pf0-1)</name>
    <dbReference type="NCBI Taxonomy" id="205922"/>
    <lineage>
        <taxon>Bacteria</taxon>
        <taxon>Pseudomonadati</taxon>
        <taxon>Pseudomonadota</taxon>
        <taxon>Gammaproteobacteria</taxon>
        <taxon>Pseudomonadales</taxon>
        <taxon>Pseudomonadaceae</taxon>
        <taxon>Pseudomonas</taxon>
    </lineage>
</organism>
<accession>Q3K6P4</accession>
<sequence>MNTPVEKPWILGLTGGIGSGKSAAAQHFIDLGIHVVDADHAARWVVEPGRPALAKIAEHFGPDVLQADGTLDRAALRKLIFEVPEQRRWLEALLHPLIAEEIAHHLALAKSPYAILVSPLLIESGQYAMTQRILVIDAPQQLQIERTLQRDQTSEQQVQAILKAQSSREDRISRADDVVVNDRDLAWLHSEVERLHHFYLTLSGGQS</sequence>
<name>COAE_PSEPF</name>
<dbReference type="EC" id="2.7.1.24" evidence="1"/>
<dbReference type="EMBL" id="CP000094">
    <property type="protein sequence ID" value="ABA76560.1"/>
    <property type="molecule type" value="Genomic_DNA"/>
</dbReference>
<dbReference type="RefSeq" id="WP_011335982.1">
    <property type="nucleotide sequence ID" value="NC_007492.2"/>
</dbReference>
<dbReference type="SMR" id="Q3K6P4"/>
<dbReference type="KEGG" id="pfo:Pfl01_4823"/>
<dbReference type="eggNOG" id="COG0237">
    <property type="taxonomic scope" value="Bacteria"/>
</dbReference>
<dbReference type="HOGENOM" id="CLU_057180_1_2_6"/>
<dbReference type="UniPathway" id="UPA00241">
    <property type="reaction ID" value="UER00356"/>
</dbReference>
<dbReference type="Proteomes" id="UP000002704">
    <property type="component" value="Chromosome"/>
</dbReference>
<dbReference type="GO" id="GO:0005737">
    <property type="term" value="C:cytoplasm"/>
    <property type="evidence" value="ECO:0007669"/>
    <property type="project" value="UniProtKB-SubCell"/>
</dbReference>
<dbReference type="GO" id="GO:0005524">
    <property type="term" value="F:ATP binding"/>
    <property type="evidence" value="ECO:0007669"/>
    <property type="project" value="UniProtKB-UniRule"/>
</dbReference>
<dbReference type="GO" id="GO:0004140">
    <property type="term" value="F:dephospho-CoA kinase activity"/>
    <property type="evidence" value="ECO:0007669"/>
    <property type="project" value="UniProtKB-UniRule"/>
</dbReference>
<dbReference type="GO" id="GO:0015937">
    <property type="term" value="P:coenzyme A biosynthetic process"/>
    <property type="evidence" value="ECO:0007669"/>
    <property type="project" value="UniProtKB-UniRule"/>
</dbReference>
<dbReference type="CDD" id="cd02022">
    <property type="entry name" value="DPCK"/>
    <property type="match status" value="1"/>
</dbReference>
<dbReference type="Gene3D" id="3.40.50.300">
    <property type="entry name" value="P-loop containing nucleotide triphosphate hydrolases"/>
    <property type="match status" value="1"/>
</dbReference>
<dbReference type="HAMAP" id="MF_00376">
    <property type="entry name" value="Dephospho_CoA_kinase"/>
    <property type="match status" value="1"/>
</dbReference>
<dbReference type="InterPro" id="IPR001977">
    <property type="entry name" value="Depp_CoAkinase"/>
</dbReference>
<dbReference type="InterPro" id="IPR027417">
    <property type="entry name" value="P-loop_NTPase"/>
</dbReference>
<dbReference type="NCBIfam" id="TIGR00152">
    <property type="entry name" value="dephospho-CoA kinase"/>
    <property type="match status" value="1"/>
</dbReference>
<dbReference type="PANTHER" id="PTHR10695:SF46">
    <property type="entry name" value="BIFUNCTIONAL COENZYME A SYNTHASE-RELATED"/>
    <property type="match status" value="1"/>
</dbReference>
<dbReference type="PANTHER" id="PTHR10695">
    <property type="entry name" value="DEPHOSPHO-COA KINASE-RELATED"/>
    <property type="match status" value="1"/>
</dbReference>
<dbReference type="Pfam" id="PF01121">
    <property type="entry name" value="CoaE"/>
    <property type="match status" value="1"/>
</dbReference>
<dbReference type="SUPFAM" id="SSF52540">
    <property type="entry name" value="P-loop containing nucleoside triphosphate hydrolases"/>
    <property type="match status" value="1"/>
</dbReference>
<dbReference type="PROSITE" id="PS51219">
    <property type="entry name" value="DPCK"/>
    <property type="match status" value="1"/>
</dbReference>
<protein>
    <recommendedName>
        <fullName evidence="1">Dephospho-CoA kinase</fullName>
        <ecNumber evidence="1">2.7.1.24</ecNumber>
    </recommendedName>
    <alternativeName>
        <fullName evidence="1">Dephosphocoenzyme A kinase</fullName>
    </alternativeName>
</protein>
<keyword id="KW-0067">ATP-binding</keyword>
<keyword id="KW-0173">Coenzyme A biosynthesis</keyword>
<keyword id="KW-0963">Cytoplasm</keyword>
<keyword id="KW-0418">Kinase</keyword>
<keyword id="KW-0547">Nucleotide-binding</keyword>
<keyword id="KW-0808">Transferase</keyword>